<reference key="1">
    <citation type="journal article" date="2000" name="Protist">
        <title>Complete gene map of the plastid genome of the nonphotosynthetic euglenoid flagellate Astasia longa.</title>
        <authorList>
            <person name="Gockel G."/>
            <person name="Hachtel W."/>
        </authorList>
    </citation>
    <scope>NUCLEOTIDE SEQUENCE [LARGE SCALE GENOMIC DNA]</scope>
    <source>
        <strain>CCAP 1204-17a</strain>
    </source>
</reference>
<organism>
    <name type="scientific">Euglena longa</name>
    <name type="common">Euglenophycean alga</name>
    <name type="synonym">Astasia longa</name>
    <dbReference type="NCBI Taxonomy" id="3037"/>
    <lineage>
        <taxon>Eukaryota</taxon>
        <taxon>Discoba</taxon>
        <taxon>Euglenozoa</taxon>
        <taxon>Euglenida</taxon>
        <taxon>Spirocuta</taxon>
        <taxon>Euglenophyceae</taxon>
        <taxon>Euglenales</taxon>
        <taxon>Euglenaceae</taxon>
        <taxon>Euglena</taxon>
    </lineage>
</organism>
<protein>
    <recommendedName>
        <fullName evidence="2">Small ribosomal subunit protein uS11c</fullName>
    </recommendedName>
    <alternativeName>
        <fullName>Plastid 30S ribosomal protein S11</fullName>
    </alternativeName>
</protein>
<accession>P58136</accession>
<keyword id="KW-0934">Plastid</keyword>
<keyword id="KW-0687">Ribonucleoprotein</keyword>
<keyword id="KW-0689">Ribosomal protein</keyword>
<keyword id="KW-0694">RNA-binding</keyword>
<keyword id="KW-0699">rRNA-binding</keyword>
<name>RR11_EUGLO</name>
<proteinExistence type="inferred from homology"/>
<feature type="chain" id="PRO_0000123291" description="Small ribosomal subunit protein uS11c">
    <location>
        <begin position="1"/>
        <end position="112"/>
    </location>
</feature>
<geneLocation type="non-photosynthetic plastid"/>
<comment type="subunit">
    <text evidence="1">Part of the 30S ribosomal subunit.</text>
</comment>
<comment type="subcellular location">
    <subcellularLocation>
        <location>Plastid</location>
    </subcellularLocation>
</comment>
<comment type="similarity">
    <text evidence="1">Belongs to the universal ribosomal protein uS11 family.</text>
</comment>
<evidence type="ECO:0000255" key="1">
    <source>
        <dbReference type="HAMAP-Rule" id="MF_01310"/>
    </source>
</evidence>
<evidence type="ECO:0000305" key="2"/>
<gene>
    <name evidence="1" type="primary">rps11</name>
</gene>
<sequence>MAMVYIKMSFHNTIVTVIDGRANVLSWCSSGVCKFKGRQKTTAFATKIVITRALKSVLERGFNGIDIKVSGPGFGRNVAIRAIIKMGFKVFSLKDITPLPYNGCRPRKRRRT</sequence>
<dbReference type="EMBL" id="AJ294725">
    <property type="protein sequence ID" value="CAC24616.1"/>
    <property type="molecule type" value="Genomic_DNA"/>
</dbReference>
<dbReference type="RefSeq" id="NP_075005.1">
    <property type="nucleotide sequence ID" value="NC_002652.1"/>
</dbReference>
<dbReference type="SMR" id="P58136"/>
<dbReference type="GeneID" id="802505"/>
<dbReference type="GO" id="GO:0009536">
    <property type="term" value="C:plastid"/>
    <property type="evidence" value="ECO:0007669"/>
    <property type="project" value="UniProtKB-SubCell"/>
</dbReference>
<dbReference type="GO" id="GO:1990904">
    <property type="term" value="C:ribonucleoprotein complex"/>
    <property type="evidence" value="ECO:0007669"/>
    <property type="project" value="UniProtKB-KW"/>
</dbReference>
<dbReference type="GO" id="GO:0005840">
    <property type="term" value="C:ribosome"/>
    <property type="evidence" value="ECO:0007669"/>
    <property type="project" value="UniProtKB-KW"/>
</dbReference>
<dbReference type="GO" id="GO:0019843">
    <property type="term" value="F:rRNA binding"/>
    <property type="evidence" value="ECO:0007669"/>
    <property type="project" value="UniProtKB-KW"/>
</dbReference>
<dbReference type="GO" id="GO:0003735">
    <property type="term" value="F:structural constituent of ribosome"/>
    <property type="evidence" value="ECO:0007669"/>
    <property type="project" value="InterPro"/>
</dbReference>
<dbReference type="GO" id="GO:0006412">
    <property type="term" value="P:translation"/>
    <property type="evidence" value="ECO:0007669"/>
    <property type="project" value="InterPro"/>
</dbReference>
<dbReference type="Gene3D" id="3.30.420.80">
    <property type="entry name" value="Ribosomal protein S11"/>
    <property type="match status" value="1"/>
</dbReference>
<dbReference type="HAMAP" id="MF_01310">
    <property type="entry name" value="Ribosomal_uS11"/>
    <property type="match status" value="1"/>
</dbReference>
<dbReference type="InterPro" id="IPR001971">
    <property type="entry name" value="Ribosomal_uS11"/>
</dbReference>
<dbReference type="InterPro" id="IPR036967">
    <property type="entry name" value="Ribosomal_uS11_sf"/>
</dbReference>
<dbReference type="NCBIfam" id="NF003698">
    <property type="entry name" value="PRK05309.1"/>
    <property type="match status" value="1"/>
</dbReference>
<dbReference type="PANTHER" id="PTHR11759">
    <property type="entry name" value="40S RIBOSOMAL PROTEIN S14/30S RIBOSOMAL PROTEIN S11"/>
    <property type="match status" value="1"/>
</dbReference>
<dbReference type="Pfam" id="PF00411">
    <property type="entry name" value="Ribosomal_S11"/>
    <property type="match status" value="1"/>
</dbReference>
<dbReference type="PIRSF" id="PIRSF002131">
    <property type="entry name" value="Ribosomal_S11"/>
    <property type="match status" value="1"/>
</dbReference>
<dbReference type="SUPFAM" id="SSF53137">
    <property type="entry name" value="Translational machinery components"/>
    <property type="match status" value="1"/>
</dbReference>